<feature type="signal peptide" evidence="1">
    <location>
        <begin position="1"/>
        <end position="24"/>
    </location>
</feature>
<feature type="chain" id="PRO_0000006591" description="Periplasmic nitrate reductase, electron transfer subunit">
    <location>
        <begin position="25"/>
        <end position="154"/>
    </location>
</feature>
<feature type="binding site" description="axial binding residue">
    <location>
        <position position="68"/>
    </location>
    <ligand>
        <name>heme c</name>
        <dbReference type="ChEBI" id="CHEBI:61717"/>
        <label>1</label>
    </ligand>
    <ligandPart>
        <name>Fe</name>
        <dbReference type="ChEBI" id="CHEBI:18248"/>
    </ligandPart>
</feature>
<feature type="binding site" description="covalent" evidence="2">
    <location>
        <position position="82"/>
    </location>
    <ligand>
        <name>heme c</name>
        <dbReference type="ChEBI" id="CHEBI:61717"/>
        <label>1</label>
    </ligand>
</feature>
<feature type="binding site" description="covalent" evidence="2">
    <location>
        <position position="85"/>
    </location>
    <ligand>
        <name>heme c</name>
        <dbReference type="ChEBI" id="CHEBI:61717"/>
        <label>1</label>
    </ligand>
</feature>
<feature type="binding site" description="axial binding residue">
    <location>
        <position position="86"/>
    </location>
    <ligand>
        <name>heme c</name>
        <dbReference type="ChEBI" id="CHEBI:61717"/>
        <label>1</label>
    </ligand>
    <ligandPart>
        <name>Fe</name>
        <dbReference type="ChEBI" id="CHEBI:18248"/>
    </ligandPart>
</feature>
<feature type="binding site" description="axial binding residue">
    <location>
        <position position="103"/>
    </location>
    <ligand>
        <name>heme c</name>
        <dbReference type="ChEBI" id="CHEBI:61717"/>
        <label>2</label>
    </ligand>
    <ligandPart>
        <name>Fe</name>
        <dbReference type="ChEBI" id="CHEBI:18248"/>
    </ligandPart>
</feature>
<feature type="binding site" description="covalent" evidence="2">
    <location>
        <position position="122"/>
    </location>
    <ligand>
        <name>heme c</name>
        <dbReference type="ChEBI" id="CHEBI:61717"/>
        <label>2</label>
    </ligand>
</feature>
<feature type="binding site" description="covalent" evidence="2">
    <location>
        <position position="125"/>
    </location>
    <ligand>
        <name>heme c</name>
        <dbReference type="ChEBI" id="CHEBI:61717"/>
        <label>2</label>
    </ligand>
</feature>
<feature type="binding site" description="axial binding residue">
    <location>
        <position position="126"/>
    </location>
    <ligand>
        <name>heme c</name>
        <dbReference type="ChEBI" id="CHEBI:61717"/>
        <label>2</label>
    </ligand>
    <ligandPart>
        <name>Fe</name>
        <dbReference type="ChEBI" id="CHEBI:18248"/>
    </ligandPart>
</feature>
<feature type="modified residue" description="Pyrrolidone carboxylic acid" evidence="1">
    <location>
        <position position="25"/>
    </location>
</feature>
<feature type="turn" evidence="5">
    <location>
        <begin position="30"/>
        <end position="32"/>
    </location>
</feature>
<feature type="turn" evidence="5">
    <location>
        <begin position="35"/>
        <end position="37"/>
    </location>
</feature>
<feature type="strand" evidence="5">
    <location>
        <begin position="75"/>
        <end position="78"/>
    </location>
</feature>
<feature type="helix" evidence="5">
    <location>
        <begin position="81"/>
        <end position="84"/>
    </location>
</feature>
<feature type="helix" evidence="5">
    <location>
        <begin position="101"/>
        <end position="104"/>
    </location>
</feature>
<feature type="helix" evidence="5">
    <location>
        <begin position="122"/>
        <end position="124"/>
    </location>
</feature>
<feature type="strand" evidence="5">
    <location>
        <begin position="143"/>
        <end position="145"/>
    </location>
</feature>
<geneLocation type="plasmid">
    <name>pRS241c</name>
</geneLocation>
<protein>
    <recommendedName>
        <fullName>Periplasmic nitrate reductase, electron transfer subunit</fullName>
    </recommendedName>
    <alternativeName>
        <fullName>Diheme cytochrome c NapB</fullName>
    </alternativeName>
</protein>
<name>NAPB_CERS4</name>
<evidence type="ECO:0000255" key="1"/>
<evidence type="ECO:0000269" key="2">
    <source>
    </source>
</evidence>
<evidence type="ECO:0000269" key="3">
    <source>
    </source>
</evidence>
<evidence type="ECO:0000305" key="4"/>
<evidence type="ECO:0007829" key="5">
    <source>
        <dbReference type="PDB" id="1OGY"/>
    </source>
</evidence>
<sequence>MSVHPTLRFLATALVALGAGAALAQDAPRLTGADRPMSEVAAPPLPETITDDRRVGRNYPEQPPVIPHSIEGYQLSVNANRCLECHRRQYSGLVAAPMISITHFQDREGQMLADVSPRRYFCTACHVPQTNAQPLVTNEFRDMLTLMPASNEAE</sequence>
<keyword id="KW-0002">3D-structure</keyword>
<keyword id="KW-0249">Electron transport</keyword>
<keyword id="KW-0349">Heme</keyword>
<keyword id="KW-0408">Iron</keyword>
<keyword id="KW-0479">Metal-binding</keyword>
<keyword id="KW-0574">Periplasm</keyword>
<keyword id="KW-0614">Plasmid</keyword>
<keyword id="KW-0873">Pyrrolidone carboxylic acid</keyword>
<keyword id="KW-1185">Reference proteome</keyword>
<keyword id="KW-0732">Signal</keyword>
<keyword id="KW-0813">Transport</keyword>
<dbReference type="EMBL" id="Z46806">
    <property type="status" value="NOT_ANNOTATED_CDS"/>
    <property type="molecule type" value="Genomic_DNA"/>
</dbReference>
<dbReference type="EMBL" id="CP000146">
    <property type="protein sequence ID" value="ABA81592.1"/>
    <property type="molecule type" value="Genomic_DNA"/>
</dbReference>
<dbReference type="RefSeq" id="WP_011331399.1">
    <property type="nucleotide sequence ID" value="NC_007489.1"/>
</dbReference>
<dbReference type="RefSeq" id="YP_345333.1">
    <property type="nucleotide sequence ID" value="NC_007489.1"/>
</dbReference>
<dbReference type="PDB" id="1OGY">
    <property type="method" value="X-ray"/>
    <property type="resolution" value="3.20 A"/>
    <property type="chains" value="B/D/F/H/J/L/N/P=25-154"/>
</dbReference>
<dbReference type="PDBsum" id="1OGY"/>
<dbReference type="SMR" id="Q53177"/>
<dbReference type="IntAct" id="Q53177">
    <property type="interactions" value="1"/>
</dbReference>
<dbReference type="EnsemblBacteria" id="ABA81592">
    <property type="protein sequence ID" value="ABA81592"/>
    <property type="gene ID" value="RSP_4117"/>
</dbReference>
<dbReference type="GeneID" id="3711833"/>
<dbReference type="KEGG" id="rsp:RSP_4117"/>
<dbReference type="PATRIC" id="fig|272943.9.peg.179"/>
<dbReference type="OrthoDB" id="13290at2"/>
<dbReference type="PhylomeDB" id="Q53177"/>
<dbReference type="EvolutionaryTrace" id="Q53177"/>
<dbReference type="Proteomes" id="UP000002703">
    <property type="component" value="Plasmid pRS241c"/>
</dbReference>
<dbReference type="GO" id="GO:0042597">
    <property type="term" value="C:periplasmic space"/>
    <property type="evidence" value="ECO:0007669"/>
    <property type="project" value="UniProtKB-SubCell"/>
</dbReference>
<dbReference type="GO" id="GO:0046872">
    <property type="term" value="F:metal ion binding"/>
    <property type="evidence" value="ECO:0007669"/>
    <property type="project" value="UniProtKB-KW"/>
</dbReference>
<dbReference type="GO" id="GO:0009061">
    <property type="term" value="P:anaerobic respiration"/>
    <property type="evidence" value="ECO:0007669"/>
    <property type="project" value="InterPro"/>
</dbReference>
<dbReference type="FunFam" id="1.10.1130.10:FF:000001">
    <property type="entry name" value="Periplasmic nitrate reductase, electron transfer subunit"/>
    <property type="match status" value="1"/>
</dbReference>
<dbReference type="Gene3D" id="1.10.1130.10">
    <property type="entry name" value="Flavocytochrome C3, Chain A"/>
    <property type="match status" value="1"/>
</dbReference>
<dbReference type="InterPro" id="IPR036280">
    <property type="entry name" value="Multihaem_cyt_sf"/>
</dbReference>
<dbReference type="InterPro" id="IPR005591">
    <property type="entry name" value="NapB"/>
</dbReference>
<dbReference type="PANTHER" id="PTHR38604">
    <property type="entry name" value="PERIPLASMIC NITRATE REDUCTASE, ELECTRON TRANSFER SUBUNIT"/>
    <property type="match status" value="1"/>
</dbReference>
<dbReference type="PANTHER" id="PTHR38604:SF1">
    <property type="entry name" value="PERIPLASMIC NITRATE REDUCTASE, ELECTRON TRANSFER SUBUNIT"/>
    <property type="match status" value="1"/>
</dbReference>
<dbReference type="Pfam" id="PF03892">
    <property type="entry name" value="NapB"/>
    <property type="match status" value="1"/>
</dbReference>
<dbReference type="PIRSF" id="PIRSF006105">
    <property type="entry name" value="NapB"/>
    <property type="match status" value="1"/>
</dbReference>
<dbReference type="SUPFAM" id="SSF48695">
    <property type="entry name" value="Multiheme cytochromes"/>
    <property type="match status" value="1"/>
</dbReference>
<dbReference type="PROSITE" id="PS51008">
    <property type="entry name" value="MULTIHEME_CYTC"/>
    <property type="match status" value="1"/>
</dbReference>
<organism>
    <name type="scientific">Cereibacter sphaeroides (strain ATCC 17023 / DSM 158 / JCM 6121 / CCUG 31486 / LMG 2827 / NBRC 12203 / NCIMB 8253 / ATH 2.4.1.)</name>
    <name type="common">Rhodobacter sphaeroides</name>
    <dbReference type="NCBI Taxonomy" id="272943"/>
    <lineage>
        <taxon>Bacteria</taxon>
        <taxon>Pseudomonadati</taxon>
        <taxon>Pseudomonadota</taxon>
        <taxon>Alphaproteobacteria</taxon>
        <taxon>Rhodobacterales</taxon>
        <taxon>Paracoccaceae</taxon>
        <taxon>Cereibacter</taxon>
    </lineage>
</organism>
<accession>Q53177</accession>
<accession>Q3IV42</accession>
<gene>
    <name type="primary">napB</name>
    <name type="ordered locus">RHOS4_40240</name>
    <name type="ORF">RSP_4117</name>
</gene>
<proteinExistence type="evidence at protein level"/>
<reference key="1">
    <citation type="journal article" date="1996" name="Mol. Microbiol.">
        <title>Isolation of periplasmic nitrate reductase genes from Rhodobacter sphaeroides DSM 158: structural and functional differences among prokaryotic nitrate reductases.</title>
        <authorList>
            <person name="Reyes F."/>
            <person name="Roldan M.D."/>
            <person name="Klipp W."/>
            <person name="Castillo F."/>
            <person name="Moreno-Vivian C."/>
        </authorList>
    </citation>
    <scope>NUCLEOTIDE SEQUENCE [GENOMIC DNA]</scope>
    <scope>FUNCTION</scope>
    <scope>DISRUPTION PHENOTYPE</scope>
    <source>
        <strain>ATCC 17023 / DSM 158 / JCM 6121 / CCUG 31486 / LMG 2827 / NBRC 12203 / NCIMB 8253 / ATH 2.4.1.</strain>
        <plasmid>pRS241c</plasmid>
    </source>
</reference>
<reference key="2">
    <citation type="submission" date="2005-09" db="EMBL/GenBank/DDBJ databases">
        <title>Complete sequence of plasmid C of Rhodobacter sphaeroides 2.4.1.</title>
        <authorList>
            <person name="Copeland A."/>
            <person name="Lucas S."/>
            <person name="Lapidus A."/>
            <person name="Barry K."/>
            <person name="Detter J.C."/>
            <person name="Glavina T."/>
            <person name="Hammon N."/>
            <person name="Israni S."/>
            <person name="Pitluck S."/>
            <person name="Richardson P."/>
            <person name="Mackenzie C."/>
            <person name="Choudhary M."/>
            <person name="Larimer F."/>
            <person name="Hauser L.J."/>
            <person name="Land M."/>
            <person name="Donohue T.J."/>
            <person name="Kaplan S."/>
        </authorList>
    </citation>
    <scope>NUCLEOTIDE SEQUENCE [LARGE SCALE GENOMIC DNA]</scope>
    <source>
        <strain>ATCC 17023 / DSM 158 / JCM 6121 / CCUG 31486 / LMG 2827 / NBRC 12203 / NCIMB 8253 / ATH 2.4.1.</strain>
        <plasmid>pRS241c</plasmid>
    </source>
</reference>
<reference key="3">
    <citation type="journal article" date="2003" name="Nat. Struct. Biol.">
        <title>Structural and redox plasticity in the heterodimeric periplasmic nitrate reductase.</title>
        <authorList>
            <person name="Arnoux P."/>
            <person name="Sabaty M."/>
            <person name="Alric J."/>
            <person name="Frangioni B."/>
            <person name="Guigliarelli B."/>
            <person name="Adriano J.-M."/>
            <person name="Pignol D."/>
        </authorList>
    </citation>
    <scope>X-RAY CRYSTALLOGRAPHY (3.20 ANGSTROMS) OF 25-154 IN COMPLEX WITH NAPA AND HEME C</scope>
    <scope>FUNCTION</scope>
    <scope>SUBUNIT</scope>
    <source>
        <strain>ATCC 17023 / DSM 158 / JCM 6121 / CCUG 31486 / LMG 2827 / NBRC 12203 / NCIMB 8253 / ATH 2.4.1.</strain>
        <plasmid>pRS241c</plasmid>
    </source>
</reference>
<comment type="function">
    <text evidence="2 3">Electron transfer subunit of the periplasmic nitrate reductase complex NapAB. Receives electrons from the membrane-anchored tetraheme c-type NapC protein and transfers these to NapA subunit, thus allowing electron flow between membrane and periplasm. Essential for periplasmic nitrate reduction with nitrate as the terminal electron acceptor.</text>
</comment>
<comment type="subunit">
    <text evidence="2">Component of the periplasmic nitrate reductase NapAB complex composed of NapA and NapB.</text>
</comment>
<comment type="subcellular location">
    <subcellularLocation>
        <location>Periplasm</location>
    </subcellularLocation>
</comment>
<comment type="induction">
    <text>Induced by nitrate. Not repressed by ammonium or oxygen.</text>
</comment>
<comment type="PTM">
    <text>Binds 2 heme C groups per subunit.</text>
</comment>
<comment type="disruption phenotype">
    <text evidence="3">Deletion mutants show reduced nitrate reductase activity.</text>
</comment>
<comment type="similarity">
    <text evidence="4">Belongs to the NapB family.</text>
</comment>